<keyword id="KW-0143">Chaperone</keyword>
<keyword id="KW-0963">Cytoplasm</keyword>
<keyword id="KW-0690">Ribosome biogenesis</keyword>
<keyword id="KW-0698">rRNA processing</keyword>
<organism>
    <name type="scientific">Staphylococcus aureus (strain USA300)</name>
    <dbReference type="NCBI Taxonomy" id="367830"/>
    <lineage>
        <taxon>Bacteria</taxon>
        <taxon>Bacillati</taxon>
        <taxon>Bacillota</taxon>
        <taxon>Bacilli</taxon>
        <taxon>Bacillales</taxon>
        <taxon>Staphylococcaceae</taxon>
        <taxon>Staphylococcus</taxon>
    </lineage>
</organism>
<proteinExistence type="inferred from homology"/>
<evidence type="ECO:0000255" key="1">
    <source>
        <dbReference type="HAMAP-Rule" id="MF_00014"/>
    </source>
</evidence>
<comment type="function">
    <text evidence="1">An accessory protein needed during the final step in the assembly of 30S ribosomal subunit, possibly for assembly of the head region. Essential for efficient processing of 16S rRNA. May be needed both before and after RbfA during the maturation of 16S rRNA. It has affinity for free ribosomal 30S subunits but not for 70S ribosomes.</text>
</comment>
<comment type="subunit">
    <text evidence="1">Binds ribosomal protein uS19.</text>
</comment>
<comment type="subcellular location">
    <subcellularLocation>
        <location evidence="1">Cytoplasm</location>
    </subcellularLocation>
</comment>
<comment type="domain">
    <text evidence="1">The PRC barrel domain binds ribosomal protein uS19.</text>
</comment>
<comment type="similarity">
    <text evidence="1">Belongs to the RimM family.</text>
</comment>
<gene>
    <name evidence="1" type="primary">rimM</name>
    <name type="ordered locus">SAUSA300_1132</name>
</gene>
<accession>Q2FHJ9</accession>
<reference key="1">
    <citation type="journal article" date="2006" name="Lancet">
        <title>Complete genome sequence of USA300, an epidemic clone of community-acquired meticillin-resistant Staphylococcus aureus.</title>
        <authorList>
            <person name="Diep B.A."/>
            <person name="Gill S.R."/>
            <person name="Chang R.F."/>
            <person name="Phan T.H."/>
            <person name="Chen J.H."/>
            <person name="Davidson M.G."/>
            <person name="Lin F."/>
            <person name="Lin J."/>
            <person name="Carleton H.A."/>
            <person name="Mongodin E.F."/>
            <person name="Sensabaugh G.F."/>
            <person name="Perdreau-Remington F."/>
        </authorList>
    </citation>
    <scope>NUCLEOTIDE SEQUENCE [LARGE SCALE GENOMIC DNA]</scope>
    <source>
        <strain>USA300</strain>
    </source>
</reference>
<sequence length="167" mass="19073">MRVEVGQIVNTHGIKGEIKVKSNSDFTDVRFQPGQVLTVVHNNNDLEYTVKSHRVHKGLHMLTFEGINNINDIEHLKGSSIYQERDHEDIVLEENEFYYSDIIGCTVFDDQETPIGRVINIFETGANDVWVIKGSKEYLIPYIADVVKEVDVENKKIIITPMEGLLD</sequence>
<feature type="chain" id="PRO_0000244171" description="Ribosome maturation factor RimM">
    <location>
        <begin position="1"/>
        <end position="167"/>
    </location>
</feature>
<feature type="domain" description="PRC barrel" evidence="1">
    <location>
        <begin position="94"/>
        <end position="165"/>
    </location>
</feature>
<name>RIMM_STAA3</name>
<dbReference type="EMBL" id="CP000255">
    <property type="protein sequence ID" value="ABD22692.1"/>
    <property type="molecule type" value="Genomic_DNA"/>
</dbReference>
<dbReference type="RefSeq" id="WP_001261987.1">
    <property type="nucleotide sequence ID" value="NZ_CP027476.1"/>
</dbReference>
<dbReference type="SMR" id="Q2FHJ9"/>
<dbReference type="KEGG" id="saa:SAUSA300_1132"/>
<dbReference type="HOGENOM" id="CLU_077636_3_1_9"/>
<dbReference type="Proteomes" id="UP000001939">
    <property type="component" value="Chromosome"/>
</dbReference>
<dbReference type="GO" id="GO:0005737">
    <property type="term" value="C:cytoplasm"/>
    <property type="evidence" value="ECO:0007669"/>
    <property type="project" value="UniProtKB-SubCell"/>
</dbReference>
<dbReference type="GO" id="GO:0005840">
    <property type="term" value="C:ribosome"/>
    <property type="evidence" value="ECO:0007669"/>
    <property type="project" value="InterPro"/>
</dbReference>
<dbReference type="GO" id="GO:0043022">
    <property type="term" value="F:ribosome binding"/>
    <property type="evidence" value="ECO:0007669"/>
    <property type="project" value="InterPro"/>
</dbReference>
<dbReference type="GO" id="GO:0042274">
    <property type="term" value="P:ribosomal small subunit biogenesis"/>
    <property type="evidence" value="ECO:0007669"/>
    <property type="project" value="UniProtKB-UniRule"/>
</dbReference>
<dbReference type="GO" id="GO:0006364">
    <property type="term" value="P:rRNA processing"/>
    <property type="evidence" value="ECO:0007669"/>
    <property type="project" value="UniProtKB-UniRule"/>
</dbReference>
<dbReference type="Gene3D" id="2.30.30.240">
    <property type="entry name" value="PRC-barrel domain"/>
    <property type="match status" value="1"/>
</dbReference>
<dbReference type="Gene3D" id="2.40.30.60">
    <property type="entry name" value="RimM"/>
    <property type="match status" value="1"/>
</dbReference>
<dbReference type="HAMAP" id="MF_00014">
    <property type="entry name" value="Ribosome_mat_RimM"/>
    <property type="match status" value="1"/>
</dbReference>
<dbReference type="InterPro" id="IPR011033">
    <property type="entry name" value="PRC_barrel-like_sf"/>
</dbReference>
<dbReference type="InterPro" id="IPR056792">
    <property type="entry name" value="PRC_RimM"/>
</dbReference>
<dbReference type="InterPro" id="IPR011961">
    <property type="entry name" value="RimM"/>
</dbReference>
<dbReference type="InterPro" id="IPR002676">
    <property type="entry name" value="RimM_N"/>
</dbReference>
<dbReference type="InterPro" id="IPR036976">
    <property type="entry name" value="RimM_N_sf"/>
</dbReference>
<dbReference type="InterPro" id="IPR009000">
    <property type="entry name" value="Transl_B-barrel_sf"/>
</dbReference>
<dbReference type="NCBIfam" id="TIGR02273">
    <property type="entry name" value="16S_RimM"/>
    <property type="match status" value="1"/>
</dbReference>
<dbReference type="PANTHER" id="PTHR33692">
    <property type="entry name" value="RIBOSOME MATURATION FACTOR RIMM"/>
    <property type="match status" value="1"/>
</dbReference>
<dbReference type="PANTHER" id="PTHR33692:SF1">
    <property type="entry name" value="RIBOSOME MATURATION FACTOR RIMM"/>
    <property type="match status" value="1"/>
</dbReference>
<dbReference type="Pfam" id="PF24986">
    <property type="entry name" value="PRC_RimM"/>
    <property type="match status" value="1"/>
</dbReference>
<dbReference type="Pfam" id="PF01782">
    <property type="entry name" value="RimM"/>
    <property type="match status" value="1"/>
</dbReference>
<dbReference type="SUPFAM" id="SSF50346">
    <property type="entry name" value="PRC-barrel domain"/>
    <property type="match status" value="1"/>
</dbReference>
<dbReference type="SUPFAM" id="SSF50447">
    <property type="entry name" value="Translation proteins"/>
    <property type="match status" value="1"/>
</dbReference>
<protein>
    <recommendedName>
        <fullName evidence="1">Ribosome maturation factor RimM</fullName>
    </recommendedName>
</protein>